<keyword id="KW-0903">Direct protein sequencing</keyword>
<keyword id="KW-0964">Secreted</keyword>
<keyword id="KW-0732">Signal</keyword>
<proteinExistence type="evidence at protein level"/>
<dbReference type="EMBL" id="EZ420111">
    <property type="status" value="NOT_ANNOTATED_CDS"/>
    <property type="molecule type" value="mRNA"/>
</dbReference>
<dbReference type="GO" id="GO:0005576">
    <property type="term" value="C:extracellular region"/>
    <property type="evidence" value="ECO:0007669"/>
    <property type="project" value="UniProtKB-SubCell"/>
</dbReference>
<comment type="subcellular location">
    <subcellularLocation>
        <location evidence="4 5">Secreted</location>
    </subcellularLocation>
</comment>
<comment type="tissue specificity">
    <text evidence="4 5">Expressed in mantle and, after secretion, incorporated into acid-insoluble nacre matrix of the shell (at protein level). Expressed primarily in the mantle with highest level in the mantle pallium and lower level in the mantle edge.</text>
</comment>
<comment type="caution">
    <text evidence="7">It is uncertain whether Met-1 or Met-4 is the initiator.</text>
</comment>
<reference evidence="7" key="1">
    <citation type="journal article" date="2010" name="Mol. Biol. Evol.">
        <title>Parallel evolution of nacre building gene sets in molluscs.</title>
        <authorList>
            <person name="Jackson D.J."/>
            <person name="McDougall C."/>
            <person name="Woodcroft B."/>
            <person name="Moase P."/>
            <person name="Rose R.A."/>
            <person name="Kube M."/>
            <person name="Reinhardt R."/>
            <person name="Rokhsar D.S."/>
            <person name="Montagnani C."/>
            <person name="Joubert C."/>
            <person name="Piquemal D."/>
            <person name="Degnan B.M."/>
        </authorList>
    </citation>
    <scope>NUCLEOTIDE SEQUENCE [MRNA]</scope>
    <source>
        <tissue evidence="3">Mantle</tissue>
    </source>
</reference>
<reference evidence="7" key="2">
    <citation type="journal article" date="2012" name="Amino Acids">
        <title>Characterization of MRNP34, a novel methionine-rich nacre protein from the pearl oysters.</title>
        <authorList>
            <person name="Marie B."/>
            <person name="Joubert C."/>
            <person name="Belliard C."/>
            <person name="Tayale A."/>
            <person name="Zanella-Cleon I."/>
            <person name="Marin F."/>
            <person name="Gueguen Y."/>
            <person name="Montagnani C."/>
        </authorList>
    </citation>
    <scope>PROTEIN SEQUENCE OF 45-55 AND 111-120</scope>
    <scope>SUBCELLULAR LOCATION</scope>
    <scope>TISSUE SPECIFICITY</scope>
    <source>
        <tissue evidence="4">Mantle</tissue>
        <tissue evidence="4">Nacre</tissue>
    </source>
</reference>
<reference key="3">
    <citation type="journal article" date="2012" name="Proc. Natl. Acad. Sci. U.S.A.">
        <title>Different secretory repertoires control the biomineralization processes of prism and nacre deposition of the pearl oyster shell.</title>
        <authorList>
            <person name="Marie B."/>
            <person name="Joubert C."/>
            <person name="Tayale A."/>
            <person name="Zanella-Cleon I."/>
            <person name="Belliard C."/>
            <person name="Piquemal D."/>
            <person name="Cochennec-Laureau N."/>
            <person name="Marin F."/>
            <person name="Gueguen Y."/>
            <person name="Montagnani C."/>
        </authorList>
    </citation>
    <scope>SUBCELLULAR LOCATION</scope>
    <scope>TISSUE SPECIFICITY</scope>
    <source>
        <tissue>Shell</tissue>
    </source>
</reference>
<sequence length="262" mass="28767">MSIMRRILCLAVVIFIINDVSSQGLGNNKNWKKNGMSLSSPGNKKPTGNNAVPQKSKMNNMNQNSLSQPKRSSPPGNSMYNMANQGPMGMMGGFGMGMNNKQMREFMIARRTHGVSPFLKKKICHMAKVAPPVNGQMPSPPQLYAQGFKIRRIGKWFSQDLDWSEGVAMCHNKEMEHRGCEKTPSSKWGRMFPGMGGMGGMGGMGGMMMGNRPMASCDVTKPNSCGNPALMKCSKYHKDRFGMPVCCATSEMTANQLENMGF</sequence>
<name>MRNP_PINMA</name>
<protein>
    <recommendedName>
        <fullName evidence="6">Methionine-rich nacre protein</fullName>
        <shortName evidence="6">MRNP</shortName>
    </recommendedName>
    <alternativeName>
        <fullName evidence="6">Methionine-rich nacre protein 34</fullName>
        <shortName evidence="6">Pmax-MRNP34</shortName>
    </alternativeName>
</protein>
<accession>P86871</accession>
<feature type="signal peptide" evidence="1">
    <location>
        <begin position="1"/>
        <end position="22"/>
    </location>
</feature>
<feature type="chain" id="PRO_0000404093" description="Methionine-rich nacre protein" evidence="1">
    <location>
        <begin position="23"/>
        <end position="262"/>
    </location>
</feature>
<feature type="region of interest" description="Disordered" evidence="2">
    <location>
        <begin position="26"/>
        <end position="84"/>
    </location>
</feature>
<feature type="compositionally biased region" description="Low complexity" evidence="2">
    <location>
        <begin position="26"/>
        <end position="35"/>
    </location>
</feature>
<feature type="compositionally biased region" description="Polar residues" evidence="2">
    <location>
        <begin position="36"/>
        <end position="84"/>
    </location>
</feature>
<organism>
    <name type="scientific">Pinctada maxima</name>
    <name type="common">Silver-lipped pearl oyster</name>
    <name type="synonym">White-lipped pearl oyster</name>
    <dbReference type="NCBI Taxonomy" id="104660"/>
    <lineage>
        <taxon>Eukaryota</taxon>
        <taxon>Metazoa</taxon>
        <taxon>Spiralia</taxon>
        <taxon>Lophotrochozoa</taxon>
        <taxon>Mollusca</taxon>
        <taxon>Bivalvia</taxon>
        <taxon>Autobranchia</taxon>
        <taxon>Pteriomorphia</taxon>
        <taxon>Pterioida</taxon>
        <taxon>Pterioidea</taxon>
        <taxon>Pteriidae</taxon>
        <taxon>Pinctada</taxon>
    </lineage>
</organism>
<evidence type="ECO:0000255" key="1"/>
<evidence type="ECO:0000256" key="2">
    <source>
        <dbReference type="SAM" id="MobiDB-lite"/>
    </source>
</evidence>
<evidence type="ECO:0000269" key="3">
    <source>
    </source>
</evidence>
<evidence type="ECO:0000269" key="4">
    <source>
    </source>
</evidence>
<evidence type="ECO:0000269" key="5">
    <source>
    </source>
</evidence>
<evidence type="ECO:0000303" key="6">
    <source>
    </source>
</evidence>
<evidence type="ECO:0000305" key="7"/>